<comment type="function">
    <text evidence="1">Forms part of the ribosomal stalk which helps the ribosome interact with GTP-bound translation factors. Is thus essential for accurate translation.</text>
</comment>
<comment type="subunit">
    <text evidence="1">Homodimer. Part of the ribosomal stalk of the 50S ribosomal subunit. Forms a multimeric L10(L12)X complex, where L10 forms an elongated spine to which 2 to 4 L12 dimers bind in a sequential fashion. Binds GTP-bound translation factors.</text>
</comment>
<comment type="similarity">
    <text evidence="1">Belongs to the bacterial ribosomal protein bL12 family.</text>
</comment>
<feature type="chain" id="PRO_1000205567" description="Large ribosomal subunit protein bL12">
    <location>
        <begin position="1"/>
        <end position="125"/>
    </location>
</feature>
<protein>
    <recommendedName>
        <fullName evidence="1">Large ribosomal subunit protein bL12</fullName>
    </recommendedName>
    <alternativeName>
        <fullName evidence="2">50S ribosomal protein L7/L12</fullName>
    </alternativeName>
</protein>
<name>RL7_RICAE</name>
<organism>
    <name type="scientific">Rickettsia africae (strain ESF-5)</name>
    <dbReference type="NCBI Taxonomy" id="347255"/>
    <lineage>
        <taxon>Bacteria</taxon>
        <taxon>Pseudomonadati</taxon>
        <taxon>Pseudomonadota</taxon>
        <taxon>Alphaproteobacteria</taxon>
        <taxon>Rickettsiales</taxon>
        <taxon>Rickettsiaceae</taxon>
        <taxon>Rickettsieae</taxon>
        <taxon>Rickettsia</taxon>
        <taxon>spotted fever group</taxon>
    </lineage>
</organism>
<accession>C3PMH6</accession>
<dbReference type="EMBL" id="CP001612">
    <property type="protein sequence ID" value="ACP53136.1"/>
    <property type="molecule type" value="Genomic_DNA"/>
</dbReference>
<dbReference type="RefSeq" id="WP_012719411.1">
    <property type="nucleotide sequence ID" value="NC_012633.1"/>
</dbReference>
<dbReference type="SMR" id="C3PMH6"/>
<dbReference type="KEGG" id="raf:RAF_ORF0169"/>
<dbReference type="HOGENOM" id="CLU_086499_3_0_5"/>
<dbReference type="Proteomes" id="UP000002305">
    <property type="component" value="Chromosome"/>
</dbReference>
<dbReference type="GO" id="GO:0005737">
    <property type="term" value="C:cytoplasm"/>
    <property type="evidence" value="ECO:0007669"/>
    <property type="project" value="UniProtKB-ARBA"/>
</dbReference>
<dbReference type="GO" id="GO:1990904">
    <property type="term" value="C:ribonucleoprotein complex"/>
    <property type="evidence" value="ECO:0007669"/>
    <property type="project" value="UniProtKB-KW"/>
</dbReference>
<dbReference type="GO" id="GO:0005840">
    <property type="term" value="C:ribosome"/>
    <property type="evidence" value="ECO:0007669"/>
    <property type="project" value="UniProtKB-KW"/>
</dbReference>
<dbReference type="GO" id="GO:0003729">
    <property type="term" value="F:mRNA binding"/>
    <property type="evidence" value="ECO:0007669"/>
    <property type="project" value="TreeGrafter"/>
</dbReference>
<dbReference type="GO" id="GO:0003735">
    <property type="term" value="F:structural constituent of ribosome"/>
    <property type="evidence" value="ECO:0007669"/>
    <property type="project" value="InterPro"/>
</dbReference>
<dbReference type="GO" id="GO:0006412">
    <property type="term" value="P:translation"/>
    <property type="evidence" value="ECO:0007669"/>
    <property type="project" value="UniProtKB-UniRule"/>
</dbReference>
<dbReference type="CDD" id="cd00387">
    <property type="entry name" value="Ribosomal_L7_L12"/>
    <property type="match status" value="1"/>
</dbReference>
<dbReference type="FunFam" id="3.30.1390.10:FF:000001">
    <property type="entry name" value="50S ribosomal protein L7/L12"/>
    <property type="match status" value="1"/>
</dbReference>
<dbReference type="Gene3D" id="3.30.1390.10">
    <property type="match status" value="1"/>
</dbReference>
<dbReference type="Gene3D" id="1.20.5.710">
    <property type="entry name" value="Single helix bin"/>
    <property type="match status" value="1"/>
</dbReference>
<dbReference type="HAMAP" id="MF_00368">
    <property type="entry name" value="Ribosomal_bL12"/>
    <property type="match status" value="1"/>
</dbReference>
<dbReference type="InterPro" id="IPR000206">
    <property type="entry name" value="Ribosomal_bL12"/>
</dbReference>
<dbReference type="InterPro" id="IPR013823">
    <property type="entry name" value="Ribosomal_bL12_C"/>
</dbReference>
<dbReference type="InterPro" id="IPR014719">
    <property type="entry name" value="Ribosomal_bL12_C/ClpS-like"/>
</dbReference>
<dbReference type="InterPro" id="IPR008932">
    <property type="entry name" value="Ribosomal_bL12_oligo"/>
</dbReference>
<dbReference type="InterPro" id="IPR036235">
    <property type="entry name" value="Ribosomal_bL12_oligo_N_sf"/>
</dbReference>
<dbReference type="NCBIfam" id="TIGR00855">
    <property type="entry name" value="L12"/>
    <property type="match status" value="1"/>
</dbReference>
<dbReference type="PANTHER" id="PTHR45987">
    <property type="entry name" value="39S RIBOSOMAL PROTEIN L12"/>
    <property type="match status" value="1"/>
</dbReference>
<dbReference type="PANTHER" id="PTHR45987:SF4">
    <property type="entry name" value="LARGE RIBOSOMAL SUBUNIT PROTEIN BL12M"/>
    <property type="match status" value="1"/>
</dbReference>
<dbReference type="Pfam" id="PF00542">
    <property type="entry name" value="Ribosomal_L12"/>
    <property type="match status" value="1"/>
</dbReference>
<dbReference type="Pfam" id="PF16320">
    <property type="entry name" value="Ribosomal_L12_N"/>
    <property type="match status" value="1"/>
</dbReference>
<dbReference type="SUPFAM" id="SSF54736">
    <property type="entry name" value="ClpS-like"/>
    <property type="match status" value="1"/>
</dbReference>
<dbReference type="SUPFAM" id="SSF48300">
    <property type="entry name" value="Ribosomal protein L7/12, oligomerisation (N-terminal) domain"/>
    <property type="match status" value="1"/>
</dbReference>
<gene>
    <name evidence="1" type="primary">rplL</name>
    <name type="ordered locus">RAF_ORF0169</name>
</gene>
<reference key="1">
    <citation type="journal article" date="2009" name="BMC Genomics">
        <title>Analysis of the Rickettsia africae genome reveals that virulence acquisition in Rickettsia species may be explained by genome reduction.</title>
        <authorList>
            <person name="Fournier P.-E."/>
            <person name="El Karkouri K."/>
            <person name="Leroy Q."/>
            <person name="Robert C."/>
            <person name="Giumelli B."/>
            <person name="Renesto P."/>
            <person name="Socolovschi C."/>
            <person name="Parola P."/>
            <person name="Audic S."/>
            <person name="Raoult D."/>
        </authorList>
    </citation>
    <scope>NUCLEOTIDE SEQUENCE [LARGE SCALE GENOMIC DNA]</scope>
    <source>
        <strain>ESF-5</strain>
    </source>
</reference>
<sequence>MADLAKIEEQLSSLTLMQAAELVKILEEKWGVSAAAPVAVAAAGAAAPAAEAVAEKTEFEVVLTAAGDKKVEVIKVVKDITGLGLIEAKKLVDEAPKPIKSNVKKADADEIKGKLEAAGAKVELK</sequence>
<evidence type="ECO:0000255" key="1">
    <source>
        <dbReference type="HAMAP-Rule" id="MF_00368"/>
    </source>
</evidence>
<evidence type="ECO:0000305" key="2"/>
<proteinExistence type="inferred from homology"/>
<keyword id="KW-0687">Ribonucleoprotein</keyword>
<keyword id="KW-0689">Ribosomal protein</keyword>